<accession>Q74MQ6</accession>
<reference key="1">
    <citation type="journal article" date="2003" name="Proc. Natl. Acad. Sci. U.S.A.">
        <title>The genome of Nanoarchaeum equitans: insights into early archaeal evolution and derived parasitism.</title>
        <authorList>
            <person name="Waters E."/>
            <person name="Hohn M.J."/>
            <person name="Ahel I."/>
            <person name="Graham D.E."/>
            <person name="Adams M.D."/>
            <person name="Barnstead M."/>
            <person name="Beeson K.Y."/>
            <person name="Bibbs L."/>
            <person name="Bolanos R."/>
            <person name="Keller M."/>
            <person name="Kretz K."/>
            <person name="Lin X."/>
            <person name="Mathur E."/>
            <person name="Ni J."/>
            <person name="Podar M."/>
            <person name="Richardson T."/>
            <person name="Sutton G.G."/>
            <person name="Simon M."/>
            <person name="Soell D."/>
            <person name="Stetter K.O."/>
            <person name="Short J.M."/>
            <person name="Noorderwier M."/>
        </authorList>
    </citation>
    <scope>NUCLEOTIDE SEQUENCE [LARGE SCALE GENOMIC DNA]</scope>
    <source>
        <strain>Kin4-M</strain>
    </source>
</reference>
<feature type="chain" id="PRO_0000366438" description="Elongation factor 1-beta">
    <location>
        <begin position="1"/>
        <end position="81"/>
    </location>
</feature>
<dbReference type="EMBL" id="AE017199">
    <property type="protein sequence ID" value="AAR39073.1"/>
    <property type="molecule type" value="Genomic_DNA"/>
</dbReference>
<dbReference type="SMR" id="Q74MQ6"/>
<dbReference type="STRING" id="228908.NEQ220"/>
<dbReference type="EnsemblBacteria" id="AAR39073">
    <property type="protein sequence ID" value="AAR39073"/>
    <property type="gene ID" value="NEQ220"/>
</dbReference>
<dbReference type="KEGG" id="neq:NEQ220"/>
<dbReference type="HOGENOM" id="CLU_165896_0_0_2"/>
<dbReference type="Proteomes" id="UP000000578">
    <property type="component" value="Chromosome"/>
</dbReference>
<dbReference type="GO" id="GO:0003746">
    <property type="term" value="F:translation elongation factor activity"/>
    <property type="evidence" value="ECO:0007669"/>
    <property type="project" value="UniProtKB-UniRule"/>
</dbReference>
<dbReference type="Gene3D" id="3.30.70.60">
    <property type="match status" value="1"/>
</dbReference>
<dbReference type="HAMAP" id="MF_00043">
    <property type="entry name" value="EF1_beta"/>
    <property type="match status" value="1"/>
</dbReference>
<dbReference type="InterPro" id="IPR036219">
    <property type="entry name" value="eEF-1beta-like_sf"/>
</dbReference>
<dbReference type="InterPro" id="IPR014038">
    <property type="entry name" value="EF1B_bsu/dsu_GNE"/>
</dbReference>
<dbReference type="InterPro" id="IPR014717">
    <property type="entry name" value="Transl_elong_EF1B/ribsomal_bS6"/>
</dbReference>
<dbReference type="InterPro" id="IPR004542">
    <property type="entry name" value="Transl_elong_EF1B_B_arc"/>
</dbReference>
<dbReference type="PANTHER" id="PTHR39647">
    <property type="entry name" value="ELONGATION FACTOR 1-BETA"/>
    <property type="match status" value="1"/>
</dbReference>
<dbReference type="PANTHER" id="PTHR39647:SF1">
    <property type="entry name" value="ELONGATION FACTOR 1-BETA"/>
    <property type="match status" value="1"/>
</dbReference>
<dbReference type="Pfam" id="PF00736">
    <property type="entry name" value="EF1_GNE"/>
    <property type="match status" value="1"/>
</dbReference>
<dbReference type="PIRSF" id="PIRSF006521">
    <property type="entry name" value="Transl_elong_EF1B_B_arc"/>
    <property type="match status" value="1"/>
</dbReference>
<dbReference type="SMART" id="SM00888">
    <property type="entry name" value="EF1_GNE"/>
    <property type="match status" value="1"/>
</dbReference>
<dbReference type="SUPFAM" id="SSF54984">
    <property type="entry name" value="eEF-1beta-like"/>
    <property type="match status" value="1"/>
</dbReference>
<evidence type="ECO:0000255" key="1">
    <source>
        <dbReference type="HAMAP-Rule" id="MF_00043"/>
    </source>
</evidence>
<sequence length="81" mass="9435">MQIIPESPEVDLDKLLEKVKEVIKDYGEYYKHEVEPLAFGLKSLIVYFLIPETSFNEEQFLDNIKQIEEVSDAEILMATRA</sequence>
<gene>
    <name evidence="1" type="primary">ef1b</name>
    <name type="ordered locus">NEQ220</name>
</gene>
<comment type="function">
    <text evidence="1">Promotes the exchange of GDP for GTP in EF-1-alpha/GDP, thus allowing the regeneration of EF-1-alpha/GTP that could then be used to form the ternary complex EF-1-alpha/GTP/AAtRNA.</text>
</comment>
<comment type="similarity">
    <text evidence="1">Belongs to the EF-1-beta/EF-1-delta family.</text>
</comment>
<name>EF1B_NANEQ</name>
<keyword id="KW-0251">Elongation factor</keyword>
<keyword id="KW-0648">Protein biosynthesis</keyword>
<keyword id="KW-1185">Reference proteome</keyword>
<protein>
    <recommendedName>
        <fullName evidence="1">Elongation factor 1-beta</fullName>
        <shortName evidence="1">EF-1-beta</shortName>
    </recommendedName>
    <alternativeName>
        <fullName evidence="1">aEF-1beta</fullName>
    </alternativeName>
</protein>
<organism>
    <name type="scientific">Nanoarchaeum equitans (strain Kin4-M)</name>
    <dbReference type="NCBI Taxonomy" id="228908"/>
    <lineage>
        <taxon>Archaea</taxon>
        <taxon>Nanobdellota</taxon>
        <taxon>Candidatus Nanoarchaeia</taxon>
        <taxon>Nanoarchaeales</taxon>
        <taxon>Nanoarchaeaceae</taxon>
        <taxon>Nanoarchaeum</taxon>
    </lineage>
</organism>
<proteinExistence type="inferred from homology"/>